<sequence length="225" mass="25046">MDQSLTQDRPLAAVFRRLGSELMPPVVETFDRSKTIFFPGDPAERVYFLLKGAVKLSRVYEAGEEITVALLRENSVFGVLSLVTGQRSDRFYHAVAFTPVELLSAPIEQVEQALKEHPDLSLLMLQGLSSRILQTEMMIETLAHRDMGSRLVSFLLILCRDFGVPAPDGIRIDLKLSHQAIAEAIGSTRVTVTRLLGDLREGNMISITKKKITVHNPVALSQQFT</sequence>
<dbReference type="EMBL" id="X71607">
    <property type="protein sequence ID" value="CAA50607.1"/>
    <property type="molecule type" value="Genomic_DNA"/>
</dbReference>
<dbReference type="EMBL" id="BA000022">
    <property type="protein sequence ID" value="BAA18011.1"/>
    <property type="molecule type" value="Genomic_DNA"/>
</dbReference>
<dbReference type="PIR" id="A48640">
    <property type="entry name" value="A48640"/>
</dbReference>
<dbReference type="SMR" id="P33779"/>
<dbReference type="FunCoup" id="P33779">
    <property type="interactions" value="214"/>
</dbReference>
<dbReference type="IntAct" id="P33779">
    <property type="interactions" value="1"/>
</dbReference>
<dbReference type="STRING" id="1148.gene:10498881"/>
<dbReference type="PaxDb" id="1148-1653095"/>
<dbReference type="EnsemblBacteria" id="BAA18011">
    <property type="protein sequence ID" value="BAA18011"/>
    <property type="gene ID" value="BAA18011"/>
</dbReference>
<dbReference type="KEGG" id="syn:sll1423"/>
<dbReference type="eggNOG" id="COG0664">
    <property type="taxonomic scope" value="Bacteria"/>
</dbReference>
<dbReference type="InParanoid" id="P33779"/>
<dbReference type="PhylomeDB" id="P33779"/>
<dbReference type="Proteomes" id="UP000001425">
    <property type="component" value="Chromosome"/>
</dbReference>
<dbReference type="GO" id="GO:0003677">
    <property type="term" value="F:DNA binding"/>
    <property type="evidence" value="ECO:0007669"/>
    <property type="project" value="UniProtKB-KW"/>
</dbReference>
<dbReference type="GO" id="GO:0003700">
    <property type="term" value="F:DNA-binding transcription factor activity"/>
    <property type="evidence" value="ECO:0007669"/>
    <property type="project" value="InterPro"/>
</dbReference>
<dbReference type="CDD" id="cd00038">
    <property type="entry name" value="CAP_ED"/>
    <property type="match status" value="1"/>
</dbReference>
<dbReference type="CDD" id="cd00092">
    <property type="entry name" value="HTH_CRP"/>
    <property type="match status" value="1"/>
</dbReference>
<dbReference type="FunFam" id="1.10.10.10:FF:000240">
    <property type="entry name" value="Global nitrogen regulator NtcA"/>
    <property type="match status" value="1"/>
</dbReference>
<dbReference type="FunFam" id="2.60.120.10:FF:000054">
    <property type="entry name" value="Global nitrogen regulator NtcA"/>
    <property type="match status" value="1"/>
</dbReference>
<dbReference type="Gene3D" id="2.60.120.10">
    <property type="entry name" value="Jelly Rolls"/>
    <property type="match status" value="1"/>
</dbReference>
<dbReference type="Gene3D" id="1.10.10.10">
    <property type="entry name" value="Winged helix-like DNA-binding domain superfamily/Winged helix DNA-binding domain"/>
    <property type="match status" value="1"/>
</dbReference>
<dbReference type="InterPro" id="IPR000595">
    <property type="entry name" value="cNMP-bd_dom"/>
</dbReference>
<dbReference type="InterPro" id="IPR018490">
    <property type="entry name" value="cNMP-bd_dom_sf"/>
</dbReference>
<dbReference type="InterPro" id="IPR050397">
    <property type="entry name" value="Env_Response_Regulators"/>
</dbReference>
<dbReference type="InterPro" id="IPR012318">
    <property type="entry name" value="HTH_CRP"/>
</dbReference>
<dbReference type="InterPro" id="IPR014710">
    <property type="entry name" value="RmlC-like_jellyroll"/>
</dbReference>
<dbReference type="InterPro" id="IPR018335">
    <property type="entry name" value="Tscrpt_reg_HTH_Crp-type_CS"/>
</dbReference>
<dbReference type="InterPro" id="IPR022299">
    <property type="entry name" value="Tscrpt_reg_NtcA"/>
</dbReference>
<dbReference type="InterPro" id="IPR036388">
    <property type="entry name" value="WH-like_DNA-bd_sf"/>
</dbReference>
<dbReference type="InterPro" id="IPR036390">
    <property type="entry name" value="WH_DNA-bd_sf"/>
</dbReference>
<dbReference type="NCBIfam" id="TIGR03697">
    <property type="entry name" value="NtcA_cyano"/>
    <property type="match status" value="1"/>
</dbReference>
<dbReference type="PANTHER" id="PTHR24567">
    <property type="entry name" value="CRP FAMILY TRANSCRIPTIONAL REGULATORY PROTEIN"/>
    <property type="match status" value="1"/>
</dbReference>
<dbReference type="PANTHER" id="PTHR24567:SF65">
    <property type="entry name" value="REGULATORY PROTEIN CYSR HOMOLOG"/>
    <property type="match status" value="1"/>
</dbReference>
<dbReference type="Pfam" id="PF00027">
    <property type="entry name" value="cNMP_binding"/>
    <property type="match status" value="1"/>
</dbReference>
<dbReference type="Pfam" id="PF13545">
    <property type="entry name" value="HTH_Crp_2"/>
    <property type="match status" value="1"/>
</dbReference>
<dbReference type="PRINTS" id="PR00034">
    <property type="entry name" value="HTHCRP"/>
</dbReference>
<dbReference type="SMART" id="SM00100">
    <property type="entry name" value="cNMP"/>
    <property type="match status" value="1"/>
</dbReference>
<dbReference type="SMART" id="SM00419">
    <property type="entry name" value="HTH_CRP"/>
    <property type="match status" value="1"/>
</dbReference>
<dbReference type="SUPFAM" id="SSF51206">
    <property type="entry name" value="cAMP-binding domain-like"/>
    <property type="match status" value="1"/>
</dbReference>
<dbReference type="SUPFAM" id="SSF46785">
    <property type="entry name" value="Winged helix' DNA-binding domain"/>
    <property type="match status" value="1"/>
</dbReference>
<dbReference type="PROSITE" id="PS50042">
    <property type="entry name" value="CNMP_BINDING_3"/>
    <property type="match status" value="1"/>
</dbReference>
<dbReference type="PROSITE" id="PS00042">
    <property type="entry name" value="HTH_CRP_1"/>
    <property type="match status" value="1"/>
</dbReference>
<dbReference type="PROSITE" id="PS51063">
    <property type="entry name" value="HTH_CRP_2"/>
    <property type="match status" value="1"/>
</dbReference>
<comment type="function">
    <text>Required for full expression of proteins subject to ammonium repression. Transcriptional activator of genes subject to nitrogen control.</text>
</comment>
<gene>
    <name type="primary">ntcA</name>
    <name type="ordered locus">sll1423</name>
</gene>
<reference key="1">
    <citation type="journal article" date="1993" name="J. Bacteriol.">
        <title>General distribution of the nitrogen control gene ntcA in cyanobacteria.</title>
        <authorList>
            <person name="Frias J.E."/>
            <person name="Merida A."/>
            <person name="Herrero A."/>
            <person name="Martin-Nieto J.M."/>
            <person name="Flores E."/>
        </authorList>
    </citation>
    <scope>NUCLEOTIDE SEQUENCE [GENOMIC DNA]</scope>
</reference>
<reference key="2">
    <citation type="journal article" date="1996" name="DNA Res.">
        <title>Sequence analysis of the genome of the unicellular cyanobacterium Synechocystis sp. strain PCC6803. II. Sequence determination of the entire genome and assignment of potential protein-coding regions.</title>
        <authorList>
            <person name="Kaneko T."/>
            <person name="Sato S."/>
            <person name="Kotani H."/>
            <person name="Tanaka A."/>
            <person name="Asamizu E."/>
            <person name="Nakamura Y."/>
            <person name="Miyajima N."/>
            <person name="Hirosawa M."/>
            <person name="Sugiura M."/>
            <person name="Sasamoto S."/>
            <person name="Kimura T."/>
            <person name="Hosouchi T."/>
            <person name="Matsuno A."/>
            <person name="Muraki A."/>
            <person name="Nakazaki N."/>
            <person name="Naruo K."/>
            <person name="Okumura S."/>
            <person name="Shimpo S."/>
            <person name="Takeuchi C."/>
            <person name="Wada T."/>
            <person name="Watanabe A."/>
            <person name="Yamada M."/>
            <person name="Yasuda M."/>
            <person name="Tabata S."/>
        </authorList>
    </citation>
    <scope>NUCLEOTIDE SEQUENCE [LARGE SCALE GENOMIC DNA]</scope>
    <source>
        <strain>ATCC 27184 / PCC 6803 / Kazusa</strain>
    </source>
</reference>
<keyword id="KW-0010">Activator</keyword>
<keyword id="KW-0238">DNA-binding</keyword>
<keyword id="KW-1185">Reference proteome</keyword>
<keyword id="KW-0804">Transcription</keyword>
<keyword id="KW-0805">Transcription regulation</keyword>
<accession>P33779</accession>
<name>NTCA_SYNY3</name>
<feature type="chain" id="PRO_0000100187" description="Global nitrogen regulator">
    <location>
        <begin position="1"/>
        <end position="225"/>
    </location>
</feature>
<feature type="domain" description="HTH crp-type" evidence="1">
    <location>
        <begin position="145"/>
        <end position="218"/>
    </location>
</feature>
<feature type="DNA-binding region" description="H-T-H motif" evidence="1">
    <location>
        <begin position="177"/>
        <end position="196"/>
    </location>
</feature>
<feature type="binding site">
    <location>
        <begin position="9"/>
        <end position="131"/>
    </location>
    <ligand>
        <name>a nucleoside 3',5'-cyclic phosphate</name>
        <dbReference type="ChEBI" id="CHEBI:58464"/>
    </ligand>
</feature>
<evidence type="ECO:0000255" key="1">
    <source>
        <dbReference type="PROSITE-ProRule" id="PRU00387"/>
    </source>
</evidence>
<proteinExistence type="predicted"/>
<protein>
    <recommendedName>
        <fullName>Global nitrogen regulator</fullName>
    </recommendedName>
</protein>
<organism>
    <name type="scientific">Synechocystis sp. (strain ATCC 27184 / PCC 6803 / Kazusa)</name>
    <dbReference type="NCBI Taxonomy" id="1111708"/>
    <lineage>
        <taxon>Bacteria</taxon>
        <taxon>Bacillati</taxon>
        <taxon>Cyanobacteriota</taxon>
        <taxon>Cyanophyceae</taxon>
        <taxon>Synechococcales</taxon>
        <taxon>Merismopediaceae</taxon>
        <taxon>Synechocystis</taxon>
    </lineage>
</organism>